<dbReference type="EMBL" id="L42023">
    <property type="protein sequence ID" value="AAC22708.1"/>
    <property type="molecule type" value="Genomic_DNA"/>
</dbReference>
<dbReference type="PIR" id="I64109">
    <property type="entry name" value="I64109"/>
</dbReference>
<dbReference type="RefSeq" id="NP_439209.1">
    <property type="nucleotide sequence ID" value="NC_000907.1"/>
</dbReference>
<dbReference type="SMR" id="P71365"/>
<dbReference type="STRING" id="71421.HI_1050"/>
<dbReference type="TCDB" id="1.A.72.1.3">
    <property type="family name" value="the mercuric ion pore (mer) superfamily"/>
</dbReference>
<dbReference type="EnsemblBacteria" id="AAC22708">
    <property type="protein sequence ID" value="AAC22708"/>
    <property type="gene ID" value="HI_1050"/>
</dbReference>
<dbReference type="KEGG" id="hin:HI_1050"/>
<dbReference type="PATRIC" id="fig|71421.8.peg.1095"/>
<dbReference type="eggNOG" id="COG2608">
    <property type="taxonomic scope" value="Bacteria"/>
</dbReference>
<dbReference type="HOGENOM" id="CLU_134973_2_2_6"/>
<dbReference type="OrthoDB" id="5689309at2"/>
<dbReference type="BioCyc" id="HINF71421:G1GJ1-1089-MONOMER"/>
<dbReference type="Proteomes" id="UP000000579">
    <property type="component" value="Chromosome"/>
</dbReference>
<dbReference type="GO" id="GO:0046872">
    <property type="term" value="F:metal ion binding"/>
    <property type="evidence" value="ECO:0007669"/>
    <property type="project" value="UniProtKB-KW"/>
</dbReference>
<dbReference type="CDD" id="cd00371">
    <property type="entry name" value="HMA"/>
    <property type="match status" value="1"/>
</dbReference>
<dbReference type="Gene3D" id="3.30.70.100">
    <property type="match status" value="1"/>
</dbReference>
<dbReference type="InterPro" id="IPR006121">
    <property type="entry name" value="HMA_dom"/>
</dbReference>
<dbReference type="InterPro" id="IPR036163">
    <property type="entry name" value="HMA_dom_sf"/>
</dbReference>
<dbReference type="Pfam" id="PF00403">
    <property type="entry name" value="HMA"/>
    <property type="match status" value="1"/>
</dbReference>
<dbReference type="SUPFAM" id="SSF55008">
    <property type="entry name" value="HMA, heavy metal-associated domain"/>
    <property type="match status" value="1"/>
</dbReference>
<dbReference type="PROSITE" id="PS50846">
    <property type="entry name" value="HMA_2"/>
    <property type="match status" value="1"/>
</dbReference>
<accession>P71365</accession>
<gene>
    <name type="ordered locus">HI_1050</name>
</gene>
<proteinExistence type="predicted"/>
<protein>
    <recommendedName>
        <fullName>Uncharacterized protein HI_1050</fullName>
    </recommendedName>
</protein>
<organism>
    <name type="scientific">Haemophilus influenzae (strain ATCC 51907 / DSM 11121 / KW20 / Rd)</name>
    <dbReference type="NCBI Taxonomy" id="71421"/>
    <lineage>
        <taxon>Bacteria</taxon>
        <taxon>Pseudomonadati</taxon>
        <taxon>Pseudomonadota</taxon>
        <taxon>Gammaproteobacteria</taxon>
        <taxon>Pasteurellales</taxon>
        <taxon>Pasteurellaceae</taxon>
        <taxon>Haemophilus</taxon>
    </lineage>
</organism>
<evidence type="ECO:0000255" key="1">
    <source>
        <dbReference type="PROSITE-ProRule" id="PRU00280"/>
    </source>
</evidence>
<reference key="1">
    <citation type="journal article" date="1995" name="Science">
        <title>Whole-genome random sequencing and assembly of Haemophilus influenzae Rd.</title>
        <authorList>
            <person name="Fleischmann R.D."/>
            <person name="Adams M.D."/>
            <person name="White O."/>
            <person name="Clayton R.A."/>
            <person name="Kirkness E.F."/>
            <person name="Kerlavage A.R."/>
            <person name="Bult C.J."/>
            <person name="Tomb J.-F."/>
            <person name="Dougherty B.A."/>
            <person name="Merrick J.M."/>
            <person name="McKenney K."/>
            <person name="Sutton G.G."/>
            <person name="FitzHugh W."/>
            <person name="Fields C.A."/>
            <person name="Gocayne J.D."/>
            <person name="Scott J.D."/>
            <person name="Shirley R."/>
            <person name="Liu L.-I."/>
            <person name="Glodek A."/>
            <person name="Kelley J.M."/>
            <person name="Weidman J.F."/>
            <person name="Phillips C.A."/>
            <person name="Spriggs T."/>
            <person name="Hedblom E."/>
            <person name="Cotton M.D."/>
            <person name="Utterback T.R."/>
            <person name="Hanna M.C."/>
            <person name="Nguyen D.T."/>
            <person name="Saudek D.M."/>
            <person name="Brandon R.C."/>
            <person name="Fine L.D."/>
            <person name="Fritchman J.L."/>
            <person name="Fuhrmann J.L."/>
            <person name="Geoghagen N.S.M."/>
            <person name="Gnehm C.L."/>
            <person name="McDonald L.A."/>
            <person name="Small K.V."/>
            <person name="Fraser C.M."/>
            <person name="Smith H.O."/>
            <person name="Venter J.C."/>
        </authorList>
    </citation>
    <scope>NUCLEOTIDE SEQUENCE [LARGE SCALE GENOMIC DNA]</scope>
    <source>
        <strain>ATCC 51907 / DSM 11121 / KW20 / Rd</strain>
    </source>
</reference>
<keyword id="KW-0479">Metal-binding</keyword>
<keyword id="KW-1185">Reference proteome</keyword>
<name>Y1050_HAEIN</name>
<feature type="chain" id="PRO_0000077996" description="Uncharacterized protein HI_1050">
    <location>
        <begin position="1"/>
        <end position="92"/>
    </location>
</feature>
<feature type="domain" description="HMA" evidence="1">
    <location>
        <begin position="24"/>
        <end position="89"/>
    </location>
</feature>
<feature type="binding site" evidence="1">
    <location>
        <position position="35"/>
    </location>
    <ligand>
        <name>a metal cation</name>
        <dbReference type="ChEBI" id="CHEBI:25213"/>
    </ligand>
</feature>
<feature type="binding site" evidence="1">
    <location>
        <position position="38"/>
    </location>
    <ligand>
        <name>a metal cation</name>
        <dbReference type="ChEBI" id="CHEBI:25213"/>
    </ligand>
</feature>
<sequence>MKKLCTALLLSLFAISFAHANETKQIVLKVKEMNCQLCAYLVNKELRNINGVISTKASIKDGLVTVVEDPNVTNQQLFDAIHKLKYTAEVVN</sequence>